<sequence>MPRGQKSKLRAREKRRQARAKNAQEKEASPGPFYGCPHQASPVASMPTSPNMPMGEQSTFSHSYTSTSDQNLDEKSSDDSEDTEDWCKDPINHKVVLLVQFLMEKYQKKEVITKADMLKYVIKTSKNHFNEILKRASEHMELAFGIDLKEVDPNRHCYALFNKLEHTFDGVMGEEKMPSSGLLMIVLGVIFMNDNCVSETEIWNVLSMMGVYANRKHFIYGDPKKVITEDMVQLKYLEYQQVPNSNPPSFEFTWGPRACAEISKMKILEFWAKIHDTTPDSFPTLYEAALKDEEERAQARAVARAHTAAMASPYSRATVCSSSHTNI</sequence>
<reference evidence="7" key="1">
    <citation type="journal article" date="2005" name="Science">
        <title>The transcriptional landscape of the mammalian genome.</title>
        <authorList>
            <person name="Carninci P."/>
            <person name="Kasukawa T."/>
            <person name="Katayama S."/>
            <person name="Gough J."/>
            <person name="Frith M.C."/>
            <person name="Maeda N."/>
            <person name="Oyama R."/>
            <person name="Ravasi T."/>
            <person name="Lenhard B."/>
            <person name="Wells C."/>
            <person name="Kodzius R."/>
            <person name="Shimokawa K."/>
            <person name="Bajic V.B."/>
            <person name="Brenner S.E."/>
            <person name="Batalov S."/>
            <person name="Forrest A.R."/>
            <person name="Zavolan M."/>
            <person name="Davis M.J."/>
            <person name="Wilming L.G."/>
            <person name="Aidinis V."/>
            <person name="Allen J.E."/>
            <person name="Ambesi-Impiombato A."/>
            <person name="Apweiler R."/>
            <person name="Aturaliya R.N."/>
            <person name="Bailey T.L."/>
            <person name="Bansal M."/>
            <person name="Baxter L."/>
            <person name="Beisel K.W."/>
            <person name="Bersano T."/>
            <person name="Bono H."/>
            <person name="Chalk A.M."/>
            <person name="Chiu K.P."/>
            <person name="Choudhary V."/>
            <person name="Christoffels A."/>
            <person name="Clutterbuck D.R."/>
            <person name="Crowe M.L."/>
            <person name="Dalla E."/>
            <person name="Dalrymple B.P."/>
            <person name="de Bono B."/>
            <person name="Della Gatta G."/>
            <person name="di Bernardo D."/>
            <person name="Down T."/>
            <person name="Engstrom P."/>
            <person name="Fagiolini M."/>
            <person name="Faulkner G."/>
            <person name="Fletcher C.F."/>
            <person name="Fukushima T."/>
            <person name="Furuno M."/>
            <person name="Futaki S."/>
            <person name="Gariboldi M."/>
            <person name="Georgii-Hemming P."/>
            <person name="Gingeras T.R."/>
            <person name="Gojobori T."/>
            <person name="Green R.E."/>
            <person name="Gustincich S."/>
            <person name="Harbers M."/>
            <person name="Hayashi Y."/>
            <person name="Hensch T.K."/>
            <person name="Hirokawa N."/>
            <person name="Hill D."/>
            <person name="Huminiecki L."/>
            <person name="Iacono M."/>
            <person name="Ikeo K."/>
            <person name="Iwama A."/>
            <person name="Ishikawa T."/>
            <person name="Jakt M."/>
            <person name="Kanapin A."/>
            <person name="Katoh M."/>
            <person name="Kawasawa Y."/>
            <person name="Kelso J."/>
            <person name="Kitamura H."/>
            <person name="Kitano H."/>
            <person name="Kollias G."/>
            <person name="Krishnan S.P."/>
            <person name="Kruger A."/>
            <person name="Kummerfeld S.K."/>
            <person name="Kurochkin I.V."/>
            <person name="Lareau L.F."/>
            <person name="Lazarevic D."/>
            <person name="Lipovich L."/>
            <person name="Liu J."/>
            <person name="Liuni S."/>
            <person name="McWilliam S."/>
            <person name="Madan Babu M."/>
            <person name="Madera M."/>
            <person name="Marchionni L."/>
            <person name="Matsuda H."/>
            <person name="Matsuzawa S."/>
            <person name="Miki H."/>
            <person name="Mignone F."/>
            <person name="Miyake S."/>
            <person name="Morris K."/>
            <person name="Mottagui-Tabar S."/>
            <person name="Mulder N."/>
            <person name="Nakano N."/>
            <person name="Nakauchi H."/>
            <person name="Ng P."/>
            <person name="Nilsson R."/>
            <person name="Nishiguchi S."/>
            <person name="Nishikawa S."/>
            <person name="Nori F."/>
            <person name="Ohara O."/>
            <person name="Okazaki Y."/>
            <person name="Orlando V."/>
            <person name="Pang K.C."/>
            <person name="Pavan W.J."/>
            <person name="Pavesi G."/>
            <person name="Pesole G."/>
            <person name="Petrovsky N."/>
            <person name="Piazza S."/>
            <person name="Reed J."/>
            <person name="Reid J.F."/>
            <person name="Ring B.Z."/>
            <person name="Ringwald M."/>
            <person name="Rost B."/>
            <person name="Ruan Y."/>
            <person name="Salzberg S.L."/>
            <person name="Sandelin A."/>
            <person name="Schneider C."/>
            <person name="Schoenbach C."/>
            <person name="Sekiguchi K."/>
            <person name="Semple C.A."/>
            <person name="Seno S."/>
            <person name="Sessa L."/>
            <person name="Sheng Y."/>
            <person name="Shibata Y."/>
            <person name="Shimada H."/>
            <person name="Shimada K."/>
            <person name="Silva D."/>
            <person name="Sinclair B."/>
            <person name="Sperling S."/>
            <person name="Stupka E."/>
            <person name="Sugiura K."/>
            <person name="Sultana R."/>
            <person name="Takenaka Y."/>
            <person name="Taki K."/>
            <person name="Tammoja K."/>
            <person name="Tan S.L."/>
            <person name="Tang S."/>
            <person name="Taylor M.S."/>
            <person name="Tegner J."/>
            <person name="Teichmann S.A."/>
            <person name="Ueda H.R."/>
            <person name="van Nimwegen E."/>
            <person name="Verardo R."/>
            <person name="Wei C.L."/>
            <person name="Yagi K."/>
            <person name="Yamanishi H."/>
            <person name="Zabarovsky E."/>
            <person name="Zhu S."/>
            <person name="Zimmer A."/>
            <person name="Hide W."/>
            <person name="Bult C."/>
            <person name="Grimmond S.M."/>
            <person name="Teasdale R.D."/>
            <person name="Liu E.T."/>
            <person name="Brusic V."/>
            <person name="Quackenbush J."/>
            <person name="Wahlestedt C."/>
            <person name="Mattick J.S."/>
            <person name="Hume D.A."/>
            <person name="Kai C."/>
            <person name="Sasaki D."/>
            <person name="Tomaru Y."/>
            <person name="Fukuda S."/>
            <person name="Kanamori-Katayama M."/>
            <person name="Suzuki M."/>
            <person name="Aoki J."/>
            <person name="Arakawa T."/>
            <person name="Iida J."/>
            <person name="Imamura K."/>
            <person name="Itoh M."/>
            <person name="Kato T."/>
            <person name="Kawaji H."/>
            <person name="Kawagashira N."/>
            <person name="Kawashima T."/>
            <person name="Kojima M."/>
            <person name="Kondo S."/>
            <person name="Konno H."/>
            <person name="Nakano K."/>
            <person name="Ninomiya N."/>
            <person name="Nishio T."/>
            <person name="Okada M."/>
            <person name="Plessy C."/>
            <person name="Shibata K."/>
            <person name="Shiraki T."/>
            <person name="Suzuki S."/>
            <person name="Tagami M."/>
            <person name="Waki K."/>
            <person name="Watahiki A."/>
            <person name="Okamura-Oho Y."/>
            <person name="Suzuki H."/>
            <person name="Kawai J."/>
            <person name="Hayashizaki Y."/>
        </authorList>
    </citation>
    <scope>NUCLEOTIDE SEQUENCE [LARGE SCALE MRNA]</scope>
    <source>
        <strain>C57BL/6J</strain>
        <tissue evidence="7">Adipose tissue</tissue>
    </source>
</reference>
<reference evidence="10" key="2">
    <citation type="journal article" date="2009" name="PLoS Biol.">
        <title>Lineage-specific biology revealed by a finished genome assembly of the mouse.</title>
        <authorList>
            <person name="Church D.M."/>
            <person name="Goodstadt L."/>
            <person name="Hillier L.W."/>
            <person name="Zody M.C."/>
            <person name="Goldstein S."/>
            <person name="She X."/>
            <person name="Bult C.J."/>
            <person name="Agarwala R."/>
            <person name="Cherry J.L."/>
            <person name="DiCuccio M."/>
            <person name="Hlavina W."/>
            <person name="Kapustin Y."/>
            <person name="Meric P."/>
            <person name="Maglott D."/>
            <person name="Birtle Z."/>
            <person name="Marques A.C."/>
            <person name="Graves T."/>
            <person name="Zhou S."/>
            <person name="Teague B."/>
            <person name="Potamousis K."/>
            <person name="Churas C."/>
            <person name="Place M."/>
            <person name="Herschleb J."/>
            <person name="Runnheim R."/>
            <person name="Forrest D."/>
            <person name="Amos-Landgraf J."/>
            <person name="Schwartz D.C."/>
            <person name="Cheng Z."/>
            <person name="Lindblad-Toh K."/>
            <person name="Eichler E.E."/>
            <person name="Ponting C.P."/>
        </authorList>
    </citation>
    <scope>NUCLEOTIDE SEQUENCE [LARGE SCALE GENOMIC DNA]</scope>
    <source>
        <strain evidence="10">C57BL/6J</strain>
    </source>
</reference>
<reference evidence="8" key="3">
    <citation type="submission" date="2005-07" db="EMBL/GenBank/DDBJ databases">
        <authorList>
            <person name="Mural R.J."/>
            <person name="Adams M.D."/>
            <person name="Myers E.W."/>
            <person name="Smith H.O."/>
            <person name="Venter J.C."/>
        </authorList>
    </citation>
    <scope>NUCLEOTIDE SEQUENCE [LARGE SCALE GENOMIC DNA]</scope>
</reference>
<reference evidence="6" key="4">
    <citation type="journal article" date="2004" name="Genome Res.">
        <title>The status, quality, and expansion of the NIH full-length cDNA project: the Mammalian Gene Collection (MGC).</title>
        <authorList>
            <consortium name="The MGC Project Team"/>
        </authorList>
    </citation>
    <scope>NUCLEOTIDE SEQUENCE [LARGE SCALE MRNA]</scope>
    <source>
        <tissue>Testis</tissue>
    </source>
</reference>
<reference evidence="5" key="5">
    <citation type="journal article" date="2012" name="Biochem. J.">
        <title>The mouse Mageb18 gene encodes a ubiquitously expressed type I MAGE protein and regulates cell proliferation and apoptosis in melanoma B16-F0 cells.</title>
        <authorList>
            <person name="Lin Y."/>
            <person name="Wen T."/>
            <person name="Meng X."/>
            <person name="Wu Z."/>
            <person name="Zhao L."/>
            <person name="Wang P."/>
            <person name="Hong Z."/>
            <person name="Yin Z."/>
        </authorList>
    </citation>
    <scope>SUBCELLULAR LOCATION</scope>
    <scope>TISSUE SPECIFICITY</scope>
    <scope>DEVELOPMENTAL STAGE</scope>
</reference>
<proteinExistence type="evidence at protein level"/>
<evidence type="ECO:0000250" key="1">
    <source>
        <dbReference type="UniProtKB" id="Q96M61"/>
    </source>
</evidence>
<evidence type="ECO:0000255" key="2">
    <source>
        <dbReference type="PROSITE-ProRule" id="PRU00127"/>
    </source>
</evidence>
<evidence type="ECO:0000256" key="3">
    <source>
        <dbReference type="SAM" id="MobiDB-lite"/>
    </source>
</evidence>
<evidence type="ECO:0000269" key="4">
    <source>
    </source>
</evidence>
<evidence type="ECO:0000305" key="5"/>
<evidence type="ECO:0000312" key="6">
    <source>
        <dbReference type="EMBL" id="AAI16802.1"/>
    </source>
</evidence>
<evidence type="ECO:0000312" key="7">
    <source>
        <dbReference type="EMBL" id="BAC32818.1"/>
    </source>
</evidence>
<evidence type="ECO:0000312" key="8">
    <source>
        <dbReference type="EMBL" id="EDL29736.1"/>
    </source>
</evidence>
<evidence type="ECO:0000312" key="9">
    <source>
        <dbReference type="MGI" id="MGI:3045344"/>
    </source>
</evidence>
<evidence type="ECO:0000312" key="10">
    <source>
        <dbReference type="Proteomes" id="UP000000589"/>
    </source>
</evidence>
<keyword id="KW-0963">Cytoplasm</keyword>
<keyword id="KW-1185">Reference proteome</keyword>
<keyword id="KW-0825">Tumor antigen</keyword>
<keyword id="KW-0833">Ubl conjugation pathway</keyword>
<feature type="chain" id="PRO_0000436362" description="Melanoma-associated antigen B18">
    <location>
        <begin position="1"/>
        <end position="327"/>
    </location>
</feature>
<feature type="domain" description="MAGE" evidence="2">
    <location>
        <begin position="91"/>
        <end position="289"/>
    </location>
</feature>
<feature type="region of interest" description="Disordered" evidence="3">
    <location>
        <begin position="1"/>
        <end position="85"/>
    </location>
</feature>
<feature type="compositionally biased region" description="Basic residues" evidence="3">
    <location>
        <begin position="1"/>
        <end position="19"/>
    </location>
</feature>
<feature type="compositionally biased region" description="Polar residues" evidence="3">
    <location>
        <begin position="46"/>
        <end position="70"/>
    </location>
</feature>
<gene>
    <name evidence="9" type="primary">Mageb18</name>
</gene>
<organism evidence="10">
    <name type="scientific">Mus musculus</name>
    <name type="common">Mouse</name>
    <dbReference type="NCBI Taxonomy" id="10090"/>
    <lineage>
        <taxon>Eukaryota</taxon>
        <taxon>Metazoa</taxon>
        <taxon>Chordata</taxon>
        <taxon>Craniata</taxon>
        <taxon>Vertebrata</taxon>
        <taxon>Euteleostomi</taxon>
        <taxon>Mammalia</taxon>
        <taxon>Eutheria</taxon>
        <taxon>Euarchontoglires</taxon>
        <taxon>Glires</taxon>
        <taxon>Rodentia</taxon>
        <taxon>Myomorpha</taxon>
        <taxon>Muroidea</taxon>
        <taxon>Muridae</taxon>
        <taxon>Murinae</taxon>
        <taxon>Mus</taxon>
        <taxon>Mus</taxon>
    </lineage>
</organism>
<accession>Q8BQR7</accession>
<name>MAGBI_MOUSE</name>
<dbReference type="EMBL" id="AK046641">
    <property type="protein sequence ID" value="BAC32818.1"/>
    <property type="molecule type" value="mRNA"/>
</dbReference>
<dbReference type="EMBL" id="AL646048">
    <property type="status" value="NOT_ANNOTATED_CDS"/>
    <property type="molecule type" value="Genomic_DNA"/>
</dbReference>
<dbReference type="EMBL" id="AL732574">
    <property type="status" value="NOT_ANNOTATED_CDS"/>
    <property type="molecule type" value="Genomic_DNA"/>
</dbReference>
<dbReference type="EMBL" id="AL954178">
    <property type="status" value="NOT_ANNOTATED_CDS"/>
    <property type="molecule type" value="Genomic_DNA"/>
</dbReference>
<dbReference type="EMBL" id="BX322619">
    <property type="status" value="NOT_ANNOTATED_CDS"/>
    <property type="molecule type" value="Genomic_DNA"/>
</dbReference>
<dbReference type="EMBL" id="BX571789">
    <property type="status" value="NOT_ANNOTATED_CDS"/>
    <property type="molecule type" value="Genomic_DNA"/>
</dbReference>
<dbReference type="EMBL" id="BX640458">
    <property type="status" value="NOT_ANNOTATED_CDS"/>
    <property type="molecule type" value="Genomic_DNA"/>
</dbReference>
<dbReference type="EMBL" id="CH466637">
    <property type="protein sequence ID" value="EDL29736.1"/>
    <property type="molecule type" value="Genomic_DNA"/>
</dbReference>
<dbReference type="EMBL" id="BC116801">
    <property type="protein sequence ID" value="AAI16802.1"/>
    <property type="molecule type" value="mRNA"/>
</dbReference>
<dbReference type="EMBL" id="BC137691">
    <property type="protein sequence ID" value="AAI37692.1"/>
    <property type="molecule type" value="mRNA"/>
</dbReference>
<dbReference type="CCDS" id="CCDS30268.1"/>
<dbReference type="RefSeq" id="NP_776144.1">
    <property type="nucleotide sequence ID" value="NM_173783.3"/>
</dbReference>
<dbReference type="SMR" id="Q8BQR7"/>
<dbReference type="FunCoup" id="Q8BQR7">
    <property type="interactions" value="733"/>
</dbReference>
<dbReference type="STRING" id="10090.ENSMUSP00000109588"/>
<dbReference type="PhosphoSitePlus" id="Q8BQR7"/>
<dbReference type="jPOST" id="Q8BQR7"/>
<dbReference type="PaxDb" id="10090-ENSMUSP00000109588"/>
<dbReference type="ProteomicsDB" id="252716"/>
<dbReference type="Antibodypedia" id="24619">
    <property type="antibodies" value="267 antibodies from 25 providers"/>
</dbReference>
<dbReference type="DNASU" id="215641"/>
<dbReference type="Ensembl" id="ENSMUST00000088137.3">
    <property type="protein sequence ID" value="ENSMUSP00000085460.3"/>
    <property type="gene ID" value="ENSMUSG00000067649.4"/>
</dbReference>
<dbReference type="Ensembl" id="ENSMUST00000113955.2">
    <property type="protein sequence ID" value="ENSMUSP00000109588.2"/>
    <property type="gene ID" value="ENSMUSG00000067649.4"/>
</dbReference>
<dbReference type="GeneID" id="215641"/>
<dbReference type="KEGG" id="mmu:215641"/>
<dbReference type="UCSC" id="uc009tsn.1">
    <property type="organism name" value="mouse"/>
</dbReference>
<dbReference type="AGR" id="MGI:3045344"/>
<dbReference type="CTD" id="286514"/>
<dbReference type="MGI" id="MGI:3045344">
    <property type="gene designation" value="Mageb18"/>
</dbReference>
<dbReference type="VEuPathDB" id="HostDB:ENSMUSG00000067649"/>
<dbReference type="eggNOG" id="KOG4562">
    <property type="taxonomic scope" value="Eukaryota"/>
</dbReference>
<dbReference type="GeneTree" id="ENSGT00940000163449"/>
<dbReference type="HOGENOM" id="CLU_039582_1_0_1"/>
<dbReference type="InParanoid" id="Q8BQR7"/>
<dbReference type="OMA" id="IRHCYAL"/>
<dbReference type="OrthoDB" id="205198at2759"/>
<dbReference type="PhylomeDB" id="Q8BQR7"/>
<dbReference type="TreeFam" id="TF328505"/>
<dbReference type="BioGRID-ORCS" id="215641">
    <property type="hits" value="0 hits in 77 CRISPR screens"/>
</dbReference>
<dbReference type="ChiTaRS" id="Mageb18">
    <property type="organism name" value="mouse"/>
</dbReference>
<dbReference type="PRO" id="PR:Q8BQR7"/>
<dbReference type="Proteomes" id="UP000000589">
    <property type="component" value="Chromosome X"/>
</dbReference>
<dbReference type="RNAct" id="Q8BQR7">
    <property type="molecule type" value="protein"/>
</dbReference>
<dbReference type="Bgee" id="ENSMUSG00000067649">
    <property type="expression patterns" value="Expressed in white adipose tissue and 3 other cell types or tissues"/>
</dbReference>
<dbReference type="GO" id="GO:0005737">
    <property type="term" value="C:cytoplasm"/>
    <property type="evidence" value="ECO:0000314"/>
    <property type="project" value="MGI"/>
</dbReference>
<dbReference type="FunFam" id="1.10.10.1200:FF:000007">
    <property type="entry name" value="Melanoma-associated antigen C2"/>
    <property type="match status" value="1"/>
</dbReference>
<dbReference type="FunFam" id="1.10.10.1210:FF:000001">
    <property type="entry name" value="melanoma-associated antigen D1"/>
    <property type="match status" value="1"/>
</dbReference>
<dbReference type="Gene3D" id="1.10.10.1200">
    <property type="entry name" value="MAGE homology domain, winged helix WH1 motif"/>
    <property type="match status" value="1"/>
</dbReference>
<dbReference type="Gene3D" id="1.10.10.1210">
    <property type="entry name" value="MAGE homology domain, winged helix WH2 motif"/>
    <property type="match status" value="1"/>
</dbReference>
<dbReference type="InterPro" id="IPR037445">
    <property type="entry name" value="MAGE"/>
</dbReference>
<dbReference type="InterPro" id="IPR021072">
    <property type="entry name" value="MAGE_N"/>
</dbReference>
<dbReference type="InterPro" id="IPR041898">
    <property type="entry name" value="MAGE_WH1"/>
</dbReference>
<dbReference type="InterPro" id="IPR041899">
    <property type="entry name" value="MAGE_WH2"/>
</dbReference>
<dbReference type="InterPro" id="IPR002190">
    <property type="entry name" value="MHD_dom"/>
</dbReference>
<dbReference type="PANTHER" id="PTHR11736:SF23">
    <property type="entry name" value="MELANOMA-ASSOCIATED ANTIGEN B18"/>
    <property type="match status" value="1"/>
</dbReference>
<dbReference type="PANTHER" id="PTHR11736">
    <property type="entry name" value="MELANOMA-ASSOCIATED ANTIGEN MAGE ANTIGEN"/>
    <property type="match status" value="1"/>
</dbReference>
<dbReference type="Pfam" id="PF01454">
    <property type="entry name" value="MAGE"/>
    <property type="match status" value="1"/>
</dbReference>
<dbReference type="SMART" id="SM01373">
    <property type="entry name" value="MAGE"/>
    <property type="match status" value="1"/>
</dbReference>
<dbReference type="SMART" id="SM01392">
    <property type="entry name" value="MAGE_N"/>
    <property type="match status" value="1"/>
</dbReference>
<dbReference type="PROSITE" id="PS50838">
    <property type="entry name" value="MAGE"/>
    <property type="match status" value="1"/>
</dbReference>
<protein>
    <recommendedName>
        <fullName evidence="9">Melanoma-associated antigen B18</fullName>
    </recommendedName>
    <alternativeName>
        <fullName evidence="1">MAGE-B18 antigen</fullName>
    </alternativeName>
</protein>
<comment type="function">
    <text evidence="1">May enhance ubiquitin ligase activity of RING-type zinc finger-containing E3 ubiquitin-protein ligases. Proposed to act through recruitment and/or stabilization of the Ubl-conjugating enzyme (E2) at the E3:substrate complex.</text>
</comment>
<comment type="subunit">
    <text evidence="1">Interacts with LNX1.</text>
</comment>
<comment type="subcellular location">
    <subcellularLocation>
        <location evidence="4">Cytoplasm</location>
    </subcellularLocation>
</comment>
<comment type="tissue specificity">
    <text evidence="4">Expressed in testis, stomach, large intestine, small intestine, spleen, lymph node, bone marrow lymphocytes and blood T-lymphocytes. Not detected in brain, heart, lung, liver or kidney (at protein level).</text>
</comment>
<comment type="developmental stage">
    <text evidence="4">In the testis, expression is detected from the first day of birth, increases steadily in the first 3 weeks of life, decreases around day 28, increases at day 35 and is stable between 35 and 56 days. Highly expressed in spermatogonia and is also observed in primary and secondary spermatocytes but less so in spermatids (at protein level).</text>
</comment>